<sequence>MKEVIQDKLGRPIRDLRISVTDRCNFRCDYCMPKEIFGDDYTFLPKNELLTFEELTRISKIYAQLGVKKIRITGGEPLLRRNLYKLVEQLNLIDGIEDIGLTTNGLLLKKHGKNLYQAGLRRINVSLDAIEDNVFQEINNRNIKASTILEQIDYAVSIGFEVKVNVVIQKGVNDNQIIPMIDYFKNKNIEVRFIEFMDVGNDNGWNFNKVVTKEEMLNMIEQHFEISPVAPKYYGEVAKYFRHKDSDAQFGLITSVSESFCSTCTRARLSSDGKFYGCLFASSEGFDVKALIRNGATDDDLKAQFKRLWSIRNDQYSDKRTMQTIENNRKKKINMNYIGG</sequence>
<feature type="chain" id="PRO_0000152998" description="GTP 3',8-cyclase">
    <location>
        <begin position="1"/>
        <end position="340"/>
    </location>
</feature>
<feature type="domain" description="Radical SAM core" evidence="2">
    <location>
        <begin position="8"/>
        <end position="229"/>
    </location>
</feature>
<feature type="binding site" evidence="1">
    <location>
        <position position="17"/>
    </location>
    <ligand>
        <name>GTP</name>
        <dbReference type="ChEBI" id="CHEBI:37565"/>
    </ligand>
</feature>
<feature type="binding site" evidence="1">
    <location>
        <position position="24"/>
    </location>
    <ligand>
        <name>[4Fe-4S] cluster</name>
        <dbReference type="ChEBI" id="CHEBI:49883"/>
        <label>1</label>
        <note>4Fe-4S-S-AdoMet</note>
    </ligand>
</feature>
<feature type="binding site" evidence="1">
    <location>
        <position position="28"/>
    </location>
    <ligand>
        <name>[4Fe-4S] cluster</name>
        <dbReference type="ChEBI" id="CHEBI:49883"/>
        <label>1</label>
        <note>4Fe-4S-S-AdoMet</note>
    </ligand>
</feature>
<feature type="binding site" evidence="1">
    <location>
        <position position="30"/>
    </location>
    <ligand>
        <name>S-adenosyl-L-methionine</name>
        <dbReference type="ChEBI" id="CHEBI:59789"/>
    </ligand>
</feature>
<feature type="binding site" evidence="1">
    <location>
        <position position="31"/>
    </location>
    <ligand>
        <name>[4Fe-4S] cluster</name>
        <dbReference type="ChEBI" id="CHEBI:49883"/>
        <label>1</label>
        <note>4Fe-4S-S-AdoMet</note>
    </ligand>
</feature>
<feature type="binding site" evidence="1">
    <location>
        <position position="71"/>
    </location>
    <ligand>
        <name>GTP</name>
        <dbReference type="ChEBI" id="CHEBI:37565"/>
    </ligand>
</feature>
<feature type="binding site" evidence="1">
    <location>
        <position position="75"/>
    </location>
    <ligand>
        <name>S-adenosyl-L-methionine</name>
        <dbReference type="ChEBI" id="CHEBI:59789"/>
    </ligand>
</feature>
<feature type="binding site" evidence="1">
    <location>
        <position position="102"/>
    </location>
    <ligand>
        <name>GTP</name>
        <dbReference type="ChEBI" id="CHEBI:37565"/>
    </ligand>
</feature>
<feature type="binding site" evidence="1">
    <location>
        <position position="126"/>
    </location>
    <ligand>
        <name>S-adenosyl-L-methionine</name>
        <dbReference type="ChEBI" id="CHEBI:59789"/>
    </ligand>
</feature>
<feature type="binding site" evidence="1">
    <location>
        <position position="163"/>
    </location>
    <ligand>
        <name>GTP</name>
        <dbReference type="ChEBI" id="CHEBI:37565"/>
    </ligand>
</feature>
<feature type="binding site" evidence="1">
    <location>
        <position position="197"/>
    </location>
    <ligand>
        <name>S-adenosyl-L-methionine</name>
        <dbReference type="ChEBI" id="CHEBI:59789"/>
    </ligand>
</feature>
<feature type="binding site" evidence="1">
    <location>
        <position position="261"/>
    </location>
    <ligand>
        <name>[4Fe-4S] cluster</name>
        <dbReference type="ChEBI" id="CHEBI:49883"/>
        <label>2</label>
        <note>4Fe-4S-substrate</note>
    </ligand>
</feature>
<feature type="binding site" evidence="1">
    <location>
        <position position="264"/>
    </location>
    <ligand>
        <name>[4Fe-4S] cluster</name>
        <dbReference type="ChEBI" id="CHEBI:49883"/>
        <label>2</label>
        <note>4Fe-4S-substrate</note>
    </ligand>
</feature>
<feature type="binding site" evidence="1">
    <location>
        <begin position="266"/>
        <end position="268"/>
    </location>
    <ligand>
        <name>GTP</name>
        <dbReference type="ChEBI" id="CHEBI:37565"/>
    </ligand>
</feature>
<feature type="binding site" evidence="1">
    <location>
        <position position="278"/>
    </location>
    <ligand>
        <name>[4Fe-4S] cluster</name>
        <dbReference type="ChEBI" id="CHEBI:49883"/>
        <label>2</label>
        <note>4Fe-4S-substrate</note>
    </ligand>
</feature>
<protein>
    <recommendedName>
        <fullName evidence="1">GTP 3',8-cyclase</fullName>
        <ecNumber evidence="1">4.1.99.22</ecNumber>
    </recommendedName>
    <alternativeName>
        <fullName evidence="1">Molybdenum cofactor biosynthesis protein A</fullName>
    </alternativeName>
</protein>
<comment type="function">
    <text evidence="1">Catalyzes the cyclization of GTP to (8S)-3',8-cyclo-7,8-dihydroguanosine 5'-triphosphate.</text>
</comment>
<comment type="catalytic activity">
    <reaction evidence="1">
        <text>GTP + AH2 + S-adenosyl-L-methionine = (8S)-3',8-cyclo-7,8-dihydroguanosine 5'-triphosphate + 5'-deoxyadenosine + L-methionine + A + H(+)</text>
        <dbReference type="Rhea" id="RHEA:49576"/>
        <dbReference type="ChEBI" id="CHEBI:13193"/>
        <dbReference type="ChEBI" id="CHEBI:15378"/>
        <dbReference type="ChEBI" id="CHEBI:17319"/>
        <dbReference type="ChEBI" id="CHEBI:17499"/>
        <dbReference type="ChEBI" id="CHEBI:37565"/>
        <dbReference type="ChEBI" id="CHEBI:57844"/>
        <dbReference type="ChEBI" id="CHEBI:59789"/>
        <dbReference type="ChEBI" id="CHEBI:131766"/>
        <dbReference type="EC" id="4.1.99.22"/>
    </reaction>
</comment>
<comment type="cofactor">
    <cofactor evidence="1">
        <name>[4Fe-4S] cluster</name>
        <dbReference type="ChEBI" id="CHEBI:49883"/>
    </cofactor>
    <text evidence="1">Binds 2 [4Fe-4S] clusters. Binds 1 [4Fe-4S] cluster coordinated with 3 cysteines and an exchangeable S-adenosyl-L-methionine and 1 [4Fe-4S] cluster coordinated with 3 cysteines and the GTP-derived substrate.</text>
</comment>
<comment type="pathway">
    <text evidence="1">Cofactor biosynthesis; molybdopterin biosynthesis.</text>
</comment>
<comment type="subunit">
    <text evidence="1">Monomer and homodimer.</text>
</comment>
<comment type="similarity">
    <text evidence="1">Belongs to the radical SAM superfamily. MoaA family.</text>
</comment>
<gene>
    <name evidence="1" type="primary">moaA</name>
    <name type="ordered locus">SERP1850</name>
</gene>
<name>MOAA_STAEQ</name>
<evidence type="ECO:0000255" key="1">
    <source>
        <dbReference type="HAMAP-Rule" id="MF_01225"/>
    </source>
</evidence>
<evidence type="ECO:0000255" key="2">
    <source>
        <dbReference type="PROSITE-ProRule" id="PRU01266"/>
    </source>
</evidence>
<reference key="1">
    <citation type="journal article" date="2005" name="J. Bacteriol.">
        <title>Insights on evolution of virulence and resistance from the complete genome analysis of an early methicillin-resistant Staphylococcus aureus strain and a biofilm-producing methicillin-resistant Staphylococcus epidermidis strain.</title>
        <authorList>
            <person name="Gill S.R."/>
            <person name="Fouts D.E."/>
            <person name="Archer G.L."/>
            <person name="Mongodin E.F."/>
            <person name="DeBoy R.T."/>
            <person name="Ravel J."/>
            <person name="Paulsen I.T."/>
            <person name="Kolonay J.F."/>
            <person name="Brinkac L.M."/>
            <person name="Beanan M.J."/>
            <person name="Dodson R.J."/>
            <person name="Daugherty S.C."/>
            <person name="Madupu R."/>
            <person name="Angiuoli S.V."/>
            <person name="Durkin A.S."/>
            <person name="Haft D.H."/>
            <person name="Vamathevan J.J."/>
            <person name="Khouri H."/>
            <person name="Utterback T.R."/>
            <person name="Lee C."/>
            <person name="Dimitrov G."/>
            <person name="Jiang L."/>
            <person name="Qin H."/>
            <person name="Weidman J."/>
            <person name="Tran K."/>
            <person name="Kang K.H."/>
            <person name="Hance I.R."/>
            <person name="Nelson K.E."/>
            <person name="Fraser C.M."/>
        </authorList>
    </citation>
    <scope>NUCLEOTIDE SEQUENCE [LARGE SCALE GENOMIC DNA]</scope>
    <source>
        <strain>ATCC 35984 / DSM 28319 / BCRC 17069 / CCUG 31568 / BM 3577 / RP62A</strain>
    </source>
</reference>
<accession>Q5HLY1</accession>
<keyword id="KW-0004">4Fe-4S</keyword>
<keyword id="KW-0342">GTP-binding</keyword>
<keyword id="KW-0408">Iron</keyword>
<keyword id="KW-0411">Iron-sulfur</keyword>
<keyword id="KW-0456">Lyase</keyword>
<keyword id="KW-0479">Metal-binding</keyword>
<keyword id="KW-0501">Molybdenum cofactor biosynthesis</keyword>
<keyword id="KW-0547">Nucleotide-binding</keyword>
<keyword id="KW-1185">Reference proteome</keyword>
<keyword id="KW-0949">S-adenosyl-L-methionine</keyword>
<proteinExistence type="inferred from homology"/>
<organism>
    <name type="scientific">Staphylococcus epidermidis (strain ATCC 35984 / DSM 28319 / BCRC 17069 / CCUG 31568 / BM 3577 / RP62A)</name>
    <dbReference type="NCBI Taxonomy" id="176279"/>
    <lineage>
        <taxon>Bacteria</taxon>
        <taxon>Bacillati</taxon>
        <taxon>Bacillota</taxon>
        <taxon>Bacilli</taxon>
        <taxon>Bacillales</taxon>
        <taxon>Staphylococcaceae</taxon>
        <taxon>Staphylococcus</taxon>
    </lineage>
</organism>
<dbReference type="EC" id="4.1.99.22" evidence="1"/>
<dbReference type="EMBL" id="CP000029">
    <property type="protein sequence ID" value="AAW55202.1"/>
    <property type="molecule type" value="Genomic_DNA"/>
</dbReference>
<dbReference type="RefSeq" id="WP_002438521.1">
    <property type="nucleotide sequence ID" value="NC_002976.3"/>
</dbReference>
<dbReference type="SMR" id="Q5HLY1"/>
<dbReference type="STRING" id="176279.SERP1850"/>
<dbReference type="GeneID" id="50018055"/>
<dbReference type="KEGG" id="ser:SERP1850"/>
<dbReference type="eggNOG" id="COG2896">
    <property type="taxonomic scope" value="Bacteria"/>
</dbReference>
<dbReference type="HOGENOM" id="CLU_009273_0_1_9"/>
<dbReference type="UniPathway" id="UPA00344"/>
<dbReference type="Proteomes" id="UP000000531">
    <property type="component" value="Chromosome"/>
</dbReference>
<dbReference type="GO" id="GO:0051539">
    <property type="term" value="F:4 iron, 4 sulfur cluster binding"/>
    <property type="evidence" value="ECO:0007669"/>
    <property type="project" value="UniProtKB-UniRule"/>
</dbReference>
<dbReference type="GO" id="GO:0061799">
    <property type="term" value="F:cyclic pyranopterin monophosphate synthase activity"/>
    <property type="evidence" value="ECO:0007669"/>
    <property type="project" value="TreeGrafter"/>
</dbReference>
<dbReference type="GO" id="GO:0061798">
    <property type="term" value="F:GTP 3',8'-cyclase activity"/>
    <property type="evidence" value="ECO:0007669"/>
    <property type="project" value="UniProtKB-UniRule"/>
</dbReference>
<dbReference type="GO" id="GO:0005525">
    <property type="term" value="F:GTP binding"/>
    <property type="evidence" value="ECO:0007669"/>
    <property type="project" value="UniProtKB-UniRule"/>
</dbReference>
<dbReference type="GO" id="GO:0046872">
    <property type="term" value="F:metal ion binding"/>
    <property type="evidence" value="ECO:0007669"/>
    <property type="project" value="UniProtKB-KW"/>
</dbReference>
<dbReference type="GO" id="GO:1904047">
    <property type="term" value="F:S-adenosyl-L-methionine binding"/>
    <property type="evidence" value="ECO:0007669"/>
    <property type="project" value="UniProtKB-UniRule"/>
</dbReference>
<dbReference type="GO" id="GO:0006777">
    <property type="term" value="P:Mo-molybdopterin cofactor biosynthetic process"/>
    <property type="evidence" value="ECO:0007669"/>
    <property type="project" value="UniProtKB-UniRule"/>
</dbReference>
<dbReference type="CDD" id="cd01335">
    <property type="entry name" value="Radical_SAM"/>
    <property type="match status" value="1"/>
</dbReference>
<dbReference type="CDD" id="cd21117">
    <property type="entry name" value="Twitch_MoaA"/>
    <property type="match status" value="1"/>
</dbReference>
<dbReference type="Gene3D" id="3.20.20.70">
    <property type="entry name" value="Aldolase class I"/>
    <property type="match status" value="1"/>
</dbReference>
<dbReference type="HAMAP" id="MF_01225_B">
    <property type="entry name" value="MoaA_B"/>
    <property type="match status" value="1"/>
</dbReference>
<dbReference type="InterPro" id="IPR013785">
    <property type="entry name" value="Aldolase_TIM"/>
</dbReference>
<dbReference type="InterPro" id="IPR006638">
    <property type="entry name" value="Elp3/MiaA/NifB-like_rSAM"/>
</dbReference>
<dbReference type="InterPro" id="IPR013483">
    <property type="entry name" value="MoaA"/>
</dbReference>
<dbReference type="InterPro" id="IPR000385">
    <property type="entry name" value="MoaA_NifB_PqqE_Fe-S-bd_CS"/>
</dbReference>
<dbReference type="InterPro" id="IPR010505">
    <property type="entry name" value="MoaA_twitch"/>
</dbReference>
<dbReference type="InterPro" id="IPR050105">
    <property type="entry name" value="MoCo_biosynth_MoaA/MoaC"/>
</dbReference>
<dbReference type="InterPro" id="IPR007197">
    <property type="entry name" value="rSAM"/>
</dbReference>
<dbReference type="NCBIfam" id="TIGR02666">
    <property type="entry name" value="moaA"/>
    <property type="match status" value="1"/>
</dbReference>
<dbReference type="PANTHER" id="PTHR22960:SF0">
    <property type="entry name" value="MOLYBDENUM COFACTOR BIOSYNTHESIS PROTEIN 1"/>
    <property type="match status" value="1"/>
</dbReference>
<dbReference type="PANTHER" id="PTHR22960">
    <property type="entry name" value="MOLYBDOPTERIN COFACTOR SYNTHESIS PROTEIN A"/>
    <property type="match status" value="1"/>
</dbReference>
<dbReference type="Pfam" id="PF13353">
    <property type="entry name" value="Fer4_12"/>
    <property type="match status" value="1"/>
</dbReference>
<dbReference type="Pfam" id="PF06463">
    <property type="entry name" value="Mob_synth_C"/>
    <property type="match status" value="1"/>
</dbReference>
<dbReference type="Pfam" id="PF04055">
    <property type="entry name" value="Radical_SAM"/>
    <property type="match status" value="1"/>
</dbReference>
<dbReference type="SFLD" id="SFLDG01383">
    <property type="entry name" value="cyclic_pyranopterin_phosphate"/>
    <property type="match status" value="1"/>
</dbReference>
<dbReference type="SFLD" id="SFLDG01386">
    <property type="entry name" value="main_SPASM_domain-containing"/>
    <property type="match status" value="1"/>
</dbReference>
<dbReference type="SMART" id="SM00729">
    <property type="entry name" value="Elp3"/>
    <property type="match status" value="1"/>
</dbReference>
<dbReference type="SUPFAM" id="SSF102114">
    <property type="entry name" value="Radical SAM enzymes"/>
    <property type="match status" value="1"/>
</dbReference>
<dbReference type="PROSITE" id="PS01305">
    <property type="entry name" value="MOAA_NIFB_PQQE"/>
    <property type="match status" value="1"/>
</dbReference>
<dbReference type="PROSITE" id="PS51918">
    <property type="entry name" value="RADICAL_SAM"/>
    <property type="match status" value="1"/>
</dbReference>